<dbReference type="EMBL" id="AE010299">
    <property type="protein sequence ID" value="AAM07222.1"/>
    <property type="molecule type" value="Genomic_DNA"/>
</dbReference>
<dbReference type="SMR" id="Q8TJB7"/>
<dbReference type="FunCoup" id="Q8TJB7">
    <property type="interactions" value="8"/>
</dbReference>
<dbReference type="STRING" id="188937.MA_3871"/>
<dbReference type="EnsemblBacteria" id="AAM07222">
    <property type="protein sequence ID" value="AAM07222"/>
    <property type="gene ID" value="MA_3871"/>
</dbReference>
<dbReference type="KEGG" id="mac:MA_3871"/>
<dbReference type="HOGENOM" id="CLU_100097_0_0_2"/>
<dbReference type="InParanoid" id="Q8TJB7"/>
<dbReference type="PhylomeDB" id="Q8TJB7"/>
<dbReference type="Proteomes" id="UP000002487">
    <property type="component" value="Chromosome"/>
</dbReference>
<dbReference type="GO" id="GO:0003677">
    <property type="term" value="F:DNA binding"/>
    <property type="evidence" value="ECO:0007669"/>
    <property type="project" value="UniProtKB-KW"/>
</dbReference>
<dbReference type="GO" id="GO:0006355">
    <property type="term" value="P:regulation of DNA-templated transcription"/>
    <property type="evidence" value="ECO:0007669"/>
    <property type="project" value="InterPro"/>
</dbReference>
<dbReference type="GO" id="GO:0006367">
    <property type="term" value="P:transcription initiation at RNA polymerase II promoter"/>
    <property type="evidence" value="ECO:0007669"/>
    <property type="project" value="InterPro"/>
</dbReference>
<dbReference type="Gene3D" id="1.10.10.10">
    <property type="entry name" value="Winged helix-like DNA-binding domain superfamily/Winged helix DNA-binding domain"/>
    <property type="match status" value="1"/>
</dbReference>
<dbReference type="HAMAP" id="MF_01909">
    <property type="entry name" value="TFE_arch"/>
    <property type="match status" value="1"/>
</dbReference>
<dbReference type="InterPro" id="IPR016481">
    <property type="entry name" value="TF_E_archaea"/>
</dbReference>
<dbReference type="InterPro" id="IPR039997">
    <property type="entry name" value="TFE"/>
</dbReference>
<dbReference type="InterPro" id="IPR017919">
    <property type="entry name" value="TFIIE/TFIIEa_HTH"/>
</dbReference>
<dbReference type="InterPro" id="IPR002853">
    <property type="entry name" value="TFIIE_asu"/>
</dbReference>
<dbReference type="InterPro" id="IPR024550">
    <property type="entry name" value="TFIIEa/SarR/Rpc3_HTH_dom"/>
</dbReference>
<dbReference type="InterPro" id="IPR036388">
    <property type="entry name" value="WH-like_DNA-bd_sf"/>
</dbReference>
<dbReference type="InterPro" id="IPR036390">
    <property type="entry name" value="WH_DNA-bd_sf"/>
</dbReference>
<dbReference type="PANTHER" id="PTHR13097:SF7">
    <property type="entry name" value="GENERAL TRANSCRIPTION FACTOR IIE SUBUNIT 1"/>
    <property type="match status" value="1"/>
</dbReference>
<dbReference type="PANTHER" id="PTHR13097">
    <property type="entry name" value="TRANSCRIPTION INITIATION FACTOR IIE, ALPHA SUBUNIT"/>
    <property type="match status" value="1"/>
</dbReference>
<dbReference type="Pfam" id="PF02002">
    <property type="entry name" value="TFIIE_alpha"/>
    <property type="match status" value="1"/>
</dbReference>
<dbReference type="PIRSF" id="PIRSF006373">
    <property type="entry name" value="TF_E_archaea"/>
    <property type="match status" value="1"/>
</dbReference>
<dbReference type="SMART" id="SM00531">
    <property type="entry name" value="TFIIE"/>
    <property type="match status" value="1"/>
</dbReference>
<dbReference type="SUPFAM" id="SSF46785">
    <property type="entry name" value="Winged helix' DNA-binding domain"/>
    <property type="match status" value="1"/>
</dbReference>
<dbReference type="PROSITE" id="PS51344">
    <property type="entry name" value="HTH_TFE_IIE"/>
    <property type="match status" value="1"/>
</dbReference>
<sequence>MNTLVDLNDKVIRGYLISLVGEEGLRMIEEMPEGEVTDEEIAAKTGVLLNTVRRTLFILYENKFAICRRERDSNSGWLTYLWHLDFSDVEHQLMREKKKLLRNLKTRLEFEENNVFYVCPQGCVRLLFDEATETEFLCPMCGEDLVYYDNSRFVSALKKRVDALSSV</sequence>
<name>TFE_METAC</name>
<organism>
    <name type="scientific">Methanosarcina acetivorans (strain ATCC 35395 / DSM 2834 / JCM 12185 / C2A)</name>
    <dbReference type="NCBI Taxonomy" id="188937"/>
    <lineage>
        <taxon>Archaea</taxon>
        <taxon>Methanobacteriati</taxon>
        <taxon>Methanobacteriota</taxon>
        <taxon>Stenosarchaea group</taxon>
        <taxon>Methanomicrobia</taxon>
        <taxon>Methanosarcinales</taxon>
        <taxon>Methanosarcinaceae</taxon>
        <taxon>Methanosarcina</taxon>
    </lineage>
</organism>
<gene>
    <name evidence="1" type="primary">tfe</name>
    <name type="ordered locus">MA_3871</name>
</gene>
<feature type="chain" id="PRO_0000326608" description="Transcription factor E">
    <location>
        <begin position="1"/>
        <end position="167"/>
    </location>
</feature>
<feature type="domain" description="HTH TFE/IIEalpha-type" evidence="1">
    <location>
        <begin position="8"/>
        <end position="90"/>
    </location>
</feature>
<evidence type="ECO:0000255" key="1">
    <source>
        <dbReference type="HAMAP-Rule" id="MF_01909"/>
    </source>
</evidence>
<comment type="function">
    <text evidence="1">Transcription factor that plays a role in the activation of archaeal genes transcribed by RNA polymerase. Facilitates transcription initiation by enhancing TATA-box recognition by TATA-box-binding protein (Tbp), and transcription factor B (Tfb) and RNA polymerase recruitment. Not absolutely required for transcription in vitro, but particularly important in cases where Tbp or Tfb function is not optimal. It dynamically alters the nucleic acid-binding properties of RNA polymerases by stabilizing the initiation complex and destabilizing elongation complexes. Seems to translocate with the RNA polymerase following initiation and acts by binding to the non template strand of the transcription bubble in elongation complexes.</text>
</comment>
<comment type="subunit">
    <text evidence="1">Monomer. Interaction with RNA polymerase subunits RpoF and RpoE is necessary for Tfe stimulatory transcription activity. Able to interact with Tbp and RNA polymerase in the absence of DNA promoter. Interacts both with the preinitiation and elongation complexes.</text>
</comment>
<comment type="domain">
    <text evidence="1">The winged helix domain is involved in binding to DNA in the preinitiation complex.</text>
</comment>
<comment type="similarity">
    <text evidence="1">Belongs to the TFE family.</text>
</comment>
<protein>
    <recommendedName>
        <fullName evidence="1">Transcription factor E</fullName>
        <shortName evidence="1">TFE</shortName>
    </recommendedName>
    <alternativeName>
        <fullName evidence="1">TFIIE subunit alpha homolog</fullName>
    </alternativeName>
    <alternativeName>
        <fullName evidence="1">Transcription initiation factor TFIIE</fullName>
    </alternativeName>
</protein>
<accession>Q8TJB7</accession>
<proteinExistence type="inferred from homology"/>
<reference key="1">
    <citation type="journal article" date="2002" name="Genome Res.">
        <title>The genome of Methanosarcina acetivorans reveals extensive metabolic and physiological diversity.</title>
        <authorList>
            <person name="Galagan J.E."/>
            <person name="Nusbaum C."/>
            <person name="Roy A."/>
            <person name="Endrizzi M.G."/>
            <person name="Macdonald P."/>
            <person name="FitzHugh W."/>
            <person name="Calvo S."/>
            <person name="Engels R."/>
            <person name="Smirnov S."/>
            <person name="Atnoor D."/>
            <person name="Brown A."/>
            <person name="Allen N."/>
            <person name="Naylor J."/>
            <person name="Stange-Thomann N."/>
            <person name="DeArellano K."/>
            <person name="Johnson R."/>
            <person name="Linton L."/>
            <person name="McEwan P."/>
            <person name="McKernan K."/>
            <person name="Talamas J."/>
            <person name="Tirrell A."/>
            <person name="Ye W."/>
            <person name="Zimmer A."/>
            <person name="Barber R.D."/>
            <person name="Cann I."/>
            <person name="Graham D.E."/>
            <person name="Grahame D.A."/>
            <person name="Guss A.M."/>
            <person name="Hedderich R."/>
            <person name="Ingram-Smith C."/>
            <person name="Kuettner H.C."/>
            <person name="Krzycki J.A."/>
            <person name="Leigh J.A."/>
            <person name="Li W."/>
            <person name="Liu J."/>
            <person name="Mukhopadhyay B."/>
            <person name="Reeve J.N."/>
            <person name="Smith K."/>
            <person name="Springer T.A."/>
            <person name="Umayam L.A."/>
            <person name="White O."/>
            <person name="White R.H."/>
            <person name="de Macario E.C."/>
            <person name="Ferry J.G."/>
            <person name="Jarrell K.F."/>
            <person name="Jing H."/>
            <person name="Macario A.J.L."/>
            <person name="Paulsen I.T."/>
            <person name="Pritchett M."/>
            <person name="Sowers K.R."/>
            <person name="Swanson R.V."/>
            <person name="Zinder S.H."/>
            <person name="Lander E."/>
            <person name="Metcalf W.W."/>
            <person name="Birren B."/>
        </authorList>
    </citation>
    <scope>NUCLEOTIDE SEQUENCE [LARGE SCALE GENOMIC DNA]</scope>
    <source>
        <strain>ATCC 35395 / DSM 2834 / JCM 12185 / C2A</strain>
    </source>
</reference>
<keyword id="KW-0238">DNA-binding</keyword>
<keyword id="KW-1185">Reference proteome</keyword>
<keyword id="KW-0804">Transcription</keyword>
<keyword id="KW-0805">Transcription regulation</keyword>